<dbReference type="EMBL" id="CP000655">
    <property type="protein sequence ID" value="ABP33920.1"/>
    <property type="molecule type" value="Genomic_DNA"/>
</dbReference>
<dbReference type="RefSeq" id="WP_011902545.1">
    <property type="nucleotide sequence ID" value="NC_009379.1"/>
</dbReference>
<dbReference type="SMR" id="A4SWQ6"/>
<dbReference type="GeneID" id="31481062"/>
<dbReference type="KEGG" id="pnu:Pnuc_0702"/>
<dbReference type="eggNOG" id="COG0353">
    <property type="taxonomic scope" value="Bacteria"/>
</dbReference>
<dbReference type="HOGENOM" id="CLU_060739_1_2_4"/>
<dbReference type="Proteomes" id="UP000000231">
    <property type="component" value="Chromosome"/>
</dbReference>
<dbReference type="GO" id="GO:0003677">
    <property type="term" value="F:DNA binding"/>
    <property type="evidence" value="ECO:0007669"/>
    <property type="project" value="UniProtKB-UniRule"/>
</dbReference>
<dbReference type="GO" id="GO:0008270">
    <property type="term" value="F:zinc ion binding"/>
    <property type="evidence" value="ECO:0007669"/>
    <property type="project" value="UniProtKB-KW"/>
</dbReference>
<dbReference type="GO" id="GO:0006310">
    <property type="term" value="P:DNA recombination"/>
    <property type="evidence" value="ECO:0007669"/>
    <property type="project" value="UniProtKB-UniRule"/>
</dbReference>
<dbReference type="GO" id="GO:0006281">
    <property type="term" value="P:DNA repair"/>
    <property type="evidence" value="ECO:0007669"/>
    <property type="project" value="UniProtKB-UniRule"/>
</dbReference>
<dbReference type="CDD" id="cd01025">
    <property type="entry name" value="TOPRIM_recR"/>
    <property type="match status" value="1"/>
</dbReference>
<dbReference type="Gene3D" id="3.40.1360.10">
    <property type="match status" value="1"/>
</dbReference>
<dbReference type="Gene3D" id="6.10.250.240">
    <property type="match status" value="1"/>
</dbReference>
<dbReference type="Gene3D" id="1.10.8.420">
    <property type="entry name" value="RecR Domain 1"/>
    <property type="match status" value="1"/>
</dbReference>
<dbReference type="HAMAP" id="MF_00017">
    <property type="entry name" value="RecR"/>
    <property type="match status" value="1"/>
</dbReference>
<dbReference type="InterPro" id="IPR000093">
    <property type="entry name" value="DNA_Rcmb_RecR"/>
</dbReference>
<dbReference type="InterPro" id="IPR023627">
    <property type="entry name" value="Rcmb_RecR"/>
</dbReference>
<dbReference type="InterPro" id="IPR015967">
    <property type="entry name" value="Rcmb_RecR_Znf"/>
</dbReference>
<dbReference type="InterPro" id="IPR006171">
    <property type="entry name" value="TOPRIM_dom"/>
</dbReference>
<dbReference type="InterPro" id="IPR034137">
    <property type="entry name" value="TOPRIM_RecR"/>
</dbReference>
<dbReference type="NCBIfam" id="TIGR00615">
    <property type="entry name" value="recR"/>
    <property type="match status" value="1"/>
</dbReference>
<dbReference type="PANTHER" id="PTHR30446">
    <property type="entry name" value="RECOMBINATION PROTEIN RECR"/>
    <property type="match status" value="1"/>
</dbReference>
<dbReference type="PANTHER" id="PTHR30446:SF0">
    <property type="entry name" value="RECOMBINATION PROTEIN RECR"/>
    <property type="match status" value="1"/>
</dbReference>
<dbReference type="Pfam" id="PF21175">
    <property type="entry name" value="RecR_C"/>
    <property type="match status" value="1"/>
</dbReference>
<dbReference type="Pfam" id="PF21176">
    <property type="entry name" value="RecR_HhH"/>
    <property type="match status" value="1"/>
</dbReference>
<dbReference type="Pfam" id="PF02132">
    <property type="entry name" value="RecR_ZnF"/>
    <property type="match status" value="1"/>
</dbReference>
<dbReference type="Pfam" id="PF13662">
    <property type="entry name" value="Toprim_4"/>
    <property type="match status" value="1"/>
</dbReference>
<dbReference type="SMART" id="SM00493">
    <property type="entry name" value="TOPRIM"/>
    <property type="match status" value="1"/>
</dbReference>
<dbReference type="SUPFAM" id="SSF111304">
    <property type="entry name" value="Recombination protein RecR"/>
    <property type="match status" value="1"/>
</dbReference>
<dbReference type="PROSITE" id="PS50880">
    <property type="entry name" value="TOPRIM"/>
    <property type="match status" value="1"/>
</dbReference>
<reference key="1">
    <citation type="journal article" date="2012" name="Stand. Genomic Sci.">
        <title>Complete genome sequence of Polynucleobacter necessarius subsp. asymbioticus type strain (QLW-P1DMWA-1(T)).</title>
        <authorList>
            <person name="Meincke L."/>
            <person name="Copeland A."/>
            <person name="Lapidus A."/>
            <person name="Lucas S."/>
            <person name="Berry K.W."/>
            <person name="Del Rio T.G."/>
            <person name="Hammon N."/>
            <person name="Dalin E."/>
            <person name="Tice H."/>
            <person name="Pitluck S."/>
            <person name="Richardson P."/>
            <person name="Bruce D."/>
            <person name="Goodwin L."/>
            <person name="Han C."/>
            <person name="Tapia R."/>
            <person name="Detter J.C."/>
            <person name="Schmutz J."/>
            <person name="Brettin T."/>
            <person name="Larimer F."/>
            <person name="Land M."/>
            <person name="Hauser L."/>
            <person name="Kyrpides N.C."/>
            <person name="Ivanova N."/>
            <person name="Goker M."/>
            <person name="Woyke T."/>
            <person name="Wu Q.L."/>
            <person name="Pockl M."/>
            <person name="Hahn M.W."/>
            <person name="Klenk H.P."/>
        </authorList>
    </citation>
    <scope>NUCLEOTIDE SEQUENCE [LARGE SCALE GENOMIC DNA]</scope>
    <source>
        <strain>DSM 18221 / CIP 109841 / QLW-P1DMWA-1</strain>
    </source>
</reference>
<gene>
    <name evidence="1" type="primary">recR</name>
    <name type="ordered locus">Pnuc_0702</name>
</gene>
<keyword id="KW-0227">DNA damage</keyword>
<keyword id="KW-0233">DNA recombination</keyword>
<keyword id="KW-0234">DNA repair</keyword>
<keyword id="KW-0479">Metal-binding</keyword>
<keyword id="KW-1185">Reference proteome</keyword>
<keyword id="KW-0862">Zinc</keyword>
<keyword id="KW-0863">Zinc-finger</keyword>
<proteinExistence type="inferred from homology"/>
<name>RECR_POLAQ</name>
<accession>A4SWQ6</accession>
<sequence length="204" mass="22108">MARVEAPQDALGRLIEALRVLPGVGPKSAQRMAFYLLQHDRNGAAVLAQSLGEAVDTVGHCARCNTFSETQICSTCADGRRDPSLLCIVETPADQVMVEQTLSFKGNYFVLMGRISPLDGMGPNEIHFDRLLTRIENPDTGVPIREVVLATNFTSEGEATAHYIGEVLKAKGIKVTRIARGIPVGGELEYVDAGTLARALMDRR</sequence>
<protein>
    <recommendedName>
        <fullName evidence="1">Recombination protein RecR</fullName>
    </recommendedName>
</protein>
<feature type="chain" id="PRO_1000074124" description="Recombination protein RecR">
    <location>
        <begin position="1"/>
        <end position="204"/>
    </location>
</feature>
<feature type="domain" description="Toprim" evidence="1">
    <location>
        <begin position="84"/>
        <end position="183"/>
    </location>
</feature>
<feature type="zinc finger region" description="C4-type" evidence="1">
    <location>
        <begin position="61"/>
        <end position="76"/>
    </location>
</feature>
<organism>
    <name type="scientific">Polynucleobacter asymbioticus (strain DSM 18221 / CIP 109841 / QLW-P1DMWA-1)</name>
    <name type="common">Polynucleobacter necessarius subsp. asymbioticus</name>
    <dbReference type="NCBI Taxonomy" id="312153"/>
    <lineage>
        <taxon>Bacteria</taxon>
        <taxon>Pseudomonadati</taxon>
        <taxon>Pseudomonadota</taxon>
        <taxon>Betaproteobacteria</taxon>
        <taxon>Burkholderiales</taxon>
        <taxon>Burkholderiaceae</taxon>
        <taxon>Polynucleobacter</taxon>
    </lineage>
</organism>
<evidence type="ECO:0000255" key="1">
    <source>
        <dbReference type="HAMAP-Rule" id="MF_00017"/>
    </source>
</evidence>
<comment type="function">
    <text evidence="1">May play a role in DNA repair. It seems to be involved in an RecBC-independent recombinational process of DNA repair. It may act with RecF and RecO.</text>
</comment>
<comment type="similarity">
    <text evidence="1">Belongs to the RecR family.</text>
</comment>